<protein>
    <recommendedName>
        <fullName evidence="1">4-diphosphocytidyl-2-C-methyl-D-erythritol kinase</fullName>
        <shortName evidence="1">CMK</shortName>
        <ecNumber evidence="1">2.7.1.148</ecNumber>
    </recommendedName>
    <alternativeName>
        <fullName evidence="1">4-(cytidine-5'-diphospho)-2-C-methyl-D-erythritol kinase</fullName>
    </alternativeName>
</protein>
<accession>Q5LC56</accession>
<sequence length="274" mass="30787">MITFPNAKINLGLNITEKRPDGYHNLETVFYPIPLEDALEITILNDSKQKFVLHQSGLEISGEPETNLVVKAYLLLEQEFQLPPVDIYLYKHIPSGAGLGGGSADAAFMLKLLNEKFNLHLADEKLEEYAAILGADCAFFIKNKPTFAEGIGNIFSPVDLSLKGYQLVLVKPDVFVSTRDAFSQIKPHYPDHSLKEIIRRPVSEWKNCMFNDFEKSVFPQYPVIEEIKKELYSKGAIYAAMSGSGSSVFGLFSPEEKITKMDFEAAFCFQTELK</sequence>
<organism>
    <name type="scientific">Bacteroides fragilis (strain ATCC 25285 / DSM 2151 / CCUG 4856 / JCM 11019 / LMG 10263 / NCTC 9343 / Onslow / VPI 2553 / EN-2)</name>
    <dbReference type="NCBI Taxonomy" id="272559"/>
    <lineage>
        <taxon>Bacteria</taxon>
        <taxon>Pseudomonadati</taxon>
        <taxon>Bacteroidota</taxon>
        <taxon>Bacteroidia</taxon>
        <taxon>Bacteroidales</taxon>
        <taxon>Bacteroidaceae</taxon>
        <taxon>Bacteroides</taxon>
    </lineage>
</organism>
<comment type="function">
    <text evidence="1">Catalyzes the phosphorylation of the position 2 hydroxy group of 4-diphosphocytidyl-2C-methyl-D-erythritol.</text>
</comment>
<comment type="catalytic activity">
    <reaction evidence="1">
        <text>4-CDP-2-C-methyl-D-erythritol + ATP = 4-CDP-2-C-methyl-D-erythritol 2-phosphate + ADP + H(+)</text>
        <dbReference type="Rhea" id="RHEA:18437"/>
        <dbReference type="ChEBI" id="CHEBI:15378"/>
        <dbReference type="ChEBI" id="CHEBI:30616"/>
        <dbReference type="ChEBI" id="CHEBI:57823"/>
        <dbReference type="ChEBI" id="CHEBI:57919"/>
        <dbReference type="ChEBI" id="CHEBI:456216"/>
        <dbReference type="EC" id="2.7.1.148"/>
    </reaction>
</comment>
<comment type="pathway">
    <text evidence="1">Isoprenoid biosynthesis; isopentenyl diphosphate biosynthesis via DXP pathway; isopentenyl diphosphate from 1-deoxy-D-xylulose 5-phosphate: step 3/6.</text>
</comment>
<comment type="similarity">
    <text evidence="1">Belongs to the GHMP kinase family. IspE subfamily.</text>
</comment>
<name>ISPE_BACFN</name>
<reference key="1">
    <citation type="journal article" date="2005" name="Science">
        <title>Extensive DNA inversions in the B. fragilis genome control variable gene expression.</title>
        <authorList>
            <person name="Cerdeno-Tarraga A.-M."/>
            <person name="Patrick S."/>
            <person name="Crossman L.C."/>
            <person name="Blakely G."/>
            <person name="Abratt V."/>
            <person name="Lennard N."/>
            <person name="Poxton I."/>
            <person name="Duerden B."/>
            <person name="Harris B."/>
            <person name="Quail M.A."/>
            <person name="Barron A."/>
            <person name="Clark L."/>
            <person name="Corton C."/>
            <person name="Doggett J."/>
            <person name="Holden M.T.G."/>
            <person name="Larke N."/>
            <person name="Line A."/>
            <person name="Lord A."/>
            <person name="Norbertczak H."/>
            <person name="Ormond D."/>
            <person name="Price C."/>
            <person name="Rabbinowitsch E."/>
            <person name="Woodward J."/>
            <person name="Barrell B.G."/>
            <person name="Parkhill J."/>
        </authorList>
    </citation>
    <scope>NUCLEOTIDE SEQUENCE [LARGE SCALE GENOMIC DNA]</scope>
    <source>
        <strain>ATCC 25285 / DSM 2151 / CCUG 4856 / JCM 11019 / LMG 10263 / NCTC 9343 / Onslow / VPI 2553 / EN-2</strain>
    </source>
</reference>
<dbReference type="EC" id="2.7.1.148" evidence="1"/>
<dbReference type="EMBL" id="CR626927">
    <property type="protein sequence ID" value="CAH08310.1"/>
    <property type="molecule type" value="Genomic_DNA"/>
</dbReference>
<dbReference type="RefSeq" id="WP_005803743.1">
    <property type="nucleotide sequence ID" value="NZ_UFTH01000001.1"/>
</dbReference>
<dbReference type="SMR" id="Q5LC56"/>
<dbReference type="PaxDb" id="272559-BF9343_2529"/>
<dbReference type="GeneID" id="60368024"/>
<dbReference type="KEGG" id="bfs:BF9343_2529"/>
<dbReference type="eggNOG" id="COG1947">
    <property type="taxonomic scope" value="Bacteria"/>
</dbReference>
<dbReference type="HOGENOM" id="CLU_053057_1_1_10"/>
<dbReference type="UniPathway" id="UPA00056">
    <property type="reaction ID" value="UER00094"/>
</dbReference>
<dbReference type="Proteomes" id="UP000006731">
    <property type="component" value="Chromosome"/>
</dbReference>
<dbReference type="GO" id="GO:0050515">
    <property type="term" value="F:4-(cytidine 5'-diphospho)-2-C-methyl-D-erythritol kinase activity"/>
    <property type="evidence" value="ECO:0007669"/>
    <property type="project" value="UniProtKB-UniRule"/>
</dbReference>
<dbReference type="GO" id="GO:0005524">
    <property type="term" value="F:ATP binding"/>
    <property type="evidence" value="ECO:0007669"/>
    <property type="project" value="UniProtKB-UniRule"/>
</dbReference>
<dbReference type="GO" id="GO:0019288">
    <property type="term" value="P:isopentenyl diphosphate biosynthetic process, methylerythritol 4-phosphate pathway"/>
    <property type="evidence" value="ECO:0007669"/>
    <property type="project" value="UniProtKB-UniRule"/>
</dbReference>
<dbReference type="GO" id="GO:0016114">
    <property type="term" value="P:terpenoid biosynthetic process"/>
    <property type="evidence" value="ECO:0007669"/>
    <property type="project" value="InterPro"/>
</dbReference>
<dbReference type="Gene3D" id="3.30.230.10">
    <property type="match status" value="1"/>
</dbReference>
<dbReference type="Gene3D" id="3.30.70.890">
    <property type="entry name" value="GHMP kinase, C-terminal domain"/>
    <property type="match status" value="1"/>
</dbReference>
<dbReference type="HAMAP" id="MF_00061">
    <property type="entry name" value="IspE"/>
    <property type="match status" value="1"/>
</dbReference>
<dbReference type="InterPro" id="IPR013750">
    <property type="entry name" value="GHMP_kinase_C_dom"/>
</dbReference>
<dbReference type="InterPro" id="IPR036554">
    <property type="entry name" value="GHMP_kinase_C_sf"/>
</dbReference>
<dbReference type="InterPro" id="IPR006204">
    <property type="entry name" value="GHMP_kinase_N_dom"/>
</dbReference>
<dbReference type="InterPro" id="IPR004424">
    <property type="entry name" value="IspE"/>
</dbReference>
<dbReference type="InterPro" id="IPR020568">
    <property type="entry name" value="Ribosomal_Su5_D2-typ_SF"/>
</dbReference>
<dbReference type="InterPro" id="IPR014721">
    <property type="entry name" value="Ribsml_uS5_D2-typ_fold_subgr"/>
</dbReference>
<dbReference type="NCBIfam" id="TIGR00154">
    <property type="entry name" value="ispE"/>
    <property type="match status" value="1"/>
</dbReference>
<dbReference type="PANTHER" id="PTHR43527">
    <property type="entry name" value="4-DIPHOSPHOCYTIDYL-2-C-METHYL-D-ERYTHRITOL KINASE, CHLOROPLASTIC"/>
    <property type="match status" value="1"/>
</dbReference>
<dbReference type="PANTHER" id="PTHR43527:SF2">
    <property type="entry name" value="4-DIPHOSPHOCYTIDYL-2-C-METHYL-D-ERYTHRITOL KINASE, CHLOROPLASTIC"/>
    <property type="match status" value="1"/>
</dbReference>
<dbReference type="Pfam" id="PF08544">
    <property type="entry name" value="GHMP_kinases_C"/>
    <property type="match status" value="1"/>
</dbReference>
<dbReference type="Pfam" id="PF00288">
    <property type="entry name" value="GHMP_kinases_N"/>
    <property type="match status" value="1"/>
</dbReference>
<dbReference type="PIRSF" id="PIRSF010376">
    <property type="entry name" value="IspE"/>
    <property type="match status" value="1"/>
</dbReference>
<dbReference type="SUPFAM" id="SSF55060">
    <property type="entry name" value="GHMP Kinase, C-terminal domain"/>
    <property type="match status" value="1"/>
</dbReference>
<dbReference type="SUPFAM" id="SSF54211">
    <property type="entry name" value="Ribosomal protein S5 domain 2-like"/>
    <property type="match status" value="1"/>
</dbReference>
<gene>
    <name evidence="1" type="primary">ispE</name>
    <name type="ordered locus">BF2610</name>
</gene>
<proteinExistence type="inferred from homology"/>
<keyword id="KW-0067">ATP-binding</keyword>
<keyword id="KW-0414">Isoprene biosynthesis</keyword>
<keyword id="KW-0418">Kinase</keyword>
<keyword id="KW-0547">Nucleotide-binding</keyword>
<keyword id="KW-0808">Transferase</keyword>
<evidence type="ECO:0000255" key="1">
    <source>
        <dbReference type="HAMAP-Rule" id="MF_00061"/>
    </source>
</evidence>
<feature type="chain" id="PRO_0000235067" description="4-diphosphocytidyl-2-C-methyl-D-erythritol kinase">
    <location>
        <begin position="1"/>
        <end position="274"/>
    </location>
</feature>
<feature type="active site" evidence="1">
    <location>
        <position position="8"/>
    </location>
</feature>
<feature type="active site" evidence="1">
    <location>
        <position position="136"/>
    </location>
</feature>
<feature type="binding site" evidence="1">
    <location>
        <begin position="94"/>
        <end position="104"/>
    </location>
    <ligand>
        <name>ATP</name>
        <dbReference type="ChEBI" id="CHEBI:30616"/>
    </ligand>
</feature>